<sequence>MSLAKDNIWKLLAPLVVMGVMFLIPVPDGMPPQAWHYFAVFVAMIVGMILEPIPATAISFIAVTICVIGSNYLLFDAKELADPAFNAQKQALKWGLAGFSSTTVWLVFGAFIFALGYEVSGLGRRIALFLVKFMGKRTLTLGYAIVIIDILLAPFTPSNTARTGGTVFPVIKNLPPLFKSFPNDPSARRIGGYLMWMMVISTSLSSSMFVTGAAPNVLGLEFVSKIAGIQISWLQWFLCFLPVGVILLIIAPWLSYVLYKPEITHSEEVATWAGDELKTMGALTRREWTLIGLVLLSLGLWVFGSEVINATAVGLLAVSLMLALHVVPWKDITRYNSAWNTLVNLATLVVMANGLTRSGFIDWFAGTMSTHLEGFSPNATVIVLVLVFYFAHYLFASLSAHTATMLPVILAVGKGIPGVPMEQLCILLVLSIGIMGCLTPYATGPGVIIYGCGYVKSKDYWRLGAIFGVIYISMLLLVGWPILAMWN</sequence>
<proteinExistence type="inferred from homology"/>
<dbReference type="EMBL" id="AE005174">
    <property type="protein sequence ID" value="AAG54947.1"/>
    <property type="molecule type" value="Genomic_DNA"/>
</dbReference>
<dbReference type="EMBL" id="BA000007">
    <property type="protein sequence ID" value="BAB34074.1"/>
    <property type="molecule type" value="Genomic_DNA"/>
</dbReference>
<dbReference type="PIR" id="C90710">
    <property type="entry name" value="C90710"/>
</dbReference>
<dbReference type="RefSeq" id="NP_308678.1">
    <property type="nucleotide sequence ID" value="NC_002695.1"/>
</dbReference>
<dbReference type="RefSeq" id="WP_000050323.1">
    <property type="nucleotide sequence ID" value="NZ_VOAI01000012.1"/>
</dbReference>
<dbReference type="SMR" id="P0AE75"/>
<dbReference type="STRING" id="155864.Z0756"/>
<dbReference type="GeneID" id="75205026"/>
<dbReference type="GeneID" id="917010"/>
<dbReference type="KEGG" id="ece:Z0756"/>
<dbReference type="KEGG" id="ecs:ECs_0651"/>
<dbReference type="PATRIC" id="fig|386585.9.peg.762"/>
<dbReference type="eggNOG" id="COG0471">
    <property type="taxonomic scope" value="Bacteria"/>
</dbReference>
<dbReference type="HOGENOM" id="CLU_005170_7_0_6"/>
<dbReference type="OMA" id="PQAWRYF"/>
<dbReference type="Proteomes" id="UP000000558">
    <property type="component" value="Chromosome"/>
</dbReference>
<dbReference type="Proteomes" id="UP000002519">
    <property type="component" value="Chromosome"/>
</dbReference>
<dbReference type="GO" id="GO:0005886">
    <property type="term" value="C:plasma membrane"/>
    <property type="evidence" value="ECO:0007669"/>
    <property type="project" value="UniProtKB-SubCell"/>
</dbReference>
<dbReference type="GO" id="GO:0015297">
    <property type="term" value="F:antiporter activity"/>
    <property type="evidence" value="ECO:0007669"/>
    <property type="project" value="UniProtKB-KW"/>
</dbReference>
<dbReference type="CDD" id="cd00625">
    <property type="entry name" value="ArsB_NhaD_permease"/>
    <property type="match status" value="1"/>
</dbReference>
<dbReference type="InterPro" id="IPR030676">
    <property type="entry name" value="CitT-rel"/>
</dbReference>
<dbReference type="InterPro" id="IPR001898">
    <property type="entry name" value="SLC13A/DASS"/>
</dbReference>
<dbReference type="NCBIfam" id="TIGR00785">
    <property type="entry name" value="dass"/>
    <property type="match status" value="1"/>
</dbReference>
<dbReference type="PANTHER" id="PTHR42826">
    <property type="entry name" value="DICARBOXYLATE TRANSPORTER 2.1, CHLOROPLASTIC"/>
    <property type="match status" value="1"/>
</dbReference>
<dbReference type="Pfam" id="PF00939">
    <property type="entry name" value="Na_sulph_symp"/>
    <property type="match status" value="1"/>
</dbReference>
<dbReference type="PIRSF" id="PIRSF002457">
    <property type="entry name" value="DASS"/>
    <property type="match status" value="1"/>
</dbReference>
<gene>
    <name type="primary">citT</name>
    <name type="ordered locus">Z0756</name>
    <name type="ordered locus">ECs0651</name>
</gene>
<evidence type="ECO:0000250" key="1"/>
<evidence type="ECO:0000255" key="2"/>
<evidence type="ECO:0000305" key="3"/>
<reference key="1">
    <citation type="journal article" date="2001" name="Nature">
        <title>Genome sequence of enterohaemorrhagic Escherichia coli O157:H7.</title>
        <authorList>
            <person name="Perna N.T."/>
            <person name="Plunkett G. III"/>
            <person name="Burland V."/>
            <person name="Mau B."/>
            <person name="Glasner J.D."/>
            <person name="Rose D.J."/>
            <person name="Mayhew G.F."/>
            <person name="Evans P.S."/>
            <person name="Gregor J."/>
            <person name="Kirkpatrick H.A."/>
            <person name="Posfai G."/>
            <person name="Hackett J."/>
            <person name="Klink S."/>
            <person name="Boutin A."/>
            <person name="Shao Y."/>
            <person name="Miller L."/>
            <person name="Grotbeck E.J."/>
            <person name="Davis N.W."/>
            <person name="Lim A."/>
            <person name="Dimalanta E.T."/>
            <person name="Potamousis K."/>
            <person name="Apodaca J."/>
            <person name="Anantharaman T.S."/>
            <person name="Lin J."/>
            <person name="Yen G."/>
            <person name="Schwartz D.C."/>
            <person name="Welch R.A."/>
            <person name="Blattner F.R."/>
        </authorList>
    </citation>
    <scope>NUCLEOTIDE SEQUENCE [LARGE SCALE GENOMIC DNA]</scope>
    <source>
        <strain>O157:H7 / EDL933 / ATCC 700927 / EHEC</strain>
    </source>
</reference>
<reference key="2">
    <citation type="journal article" date="2001" name="DNA Res.">
        <title>Complete genome sequence of enterohemorrhagic Escherichia coli O157:H7 and genomic comparison with a laboratory strain K-12.</title>
        <authorList>
            <person name="Hayashi T."/>
            <person name="Makino K."/>
            <person name="Ohnishi M."/>
            <person name="Kurokawa K."/>
            <person name="Ishii K."/>
            <person name="Yokoyama K."/>
            <person name="Han C.-G."/>
            <person name="Ohtsubo E."/>
            <person name="Nakayama K."/>
            <person name="Murata T."/>
            <person name="Tanaka M."/>
            <person name="Tobe T."/>
            <person name="Iida T."/>
            <person name="Takami H."/>
            <person name="Honda T."/>
            <person name="Sasakawa C."/>
            <person name="Ogasawara N."/>
            <person name="Yasunaga T."/>
            <person name="Kuhara S."/>
            <person name="Shiba T."/>
            <person name="Hattori M."/>
            <person name="Shinagawa H."/>
        </authorList>
    </citation>
    <scope>NUCLEOTIDE SEQUENCE [LARGE SCALE GENOMIC DNA]</scope>
    <source>
        <strain>O157:H7 / Sakai / RIMD 0509952 / EHEC</strain>
    </source>
</reference>
<keyword id="KW-0050">Antiport</keyword>
<keyword id="KW-0997">Cell inner membrane</keyword>
<keyword id="KW-1003">Cell membrane</keyword>
<keyword id="KW-0472">Membrane</keyword>
<keyword id="KW-1185">Reference proteome</keyword>
<keyword id="KW-0812">Transmembrane</keyword>
<keyword id="KW-1133">Transmembrane helix</keyword>
<keyword id="KW-0813">Transport</keyword>
<organism>
    <name type="scientific">Escherichia coli O157:H7</name>
    <dbReference type="NCBI Taxonomy" id="83334"/>
    <lineage>
        <taxon>Bacteria</taxon>
        <taxon>Pseudomonadati</taxon>
        <taxon>Pseudomonadota</taxon>
        <taxon>Gammaproteobacteria</taxon>
        <taxon>Enterobacterales</taxon>
        <taxon>Enterobacteriaceae</taxon>
        <taxon>Escherichia</taxon>
    </lineage>
</organism>
<accession>P0AE75</accession>
<accession>P77405</accession>
<comment type="function">
    <text evidence="1">Responsible for the uptake of citrate in exchange to the efflux of succinate. Has a relatively broad specificity for C(4)-dicarboxylates and tricarboxylates (By similarity).</text>
</comment>
<comment type="subcellular location">
    <subcellularLocation>
        <location evidence="1">Cell inner membrane</location>
        <topology evidence="1">Multi-pass membrane protein</topology>
    </subcellularLocation>
</comment>
<comment type="similarity">
    <text evidence="3">Belongs to the SLC13A/DASS transporter (TC 2.A.47) family. DIT1 subfamily.</text>
</comment>
<protein>
    <recommendedName>
        <fullName>Citrate/succinate antiporter</fullName>
    </recommendedName>
    <alternativeName>
        <fullName>Citrate carrier</fullName>
    </alternativeName>
    <alternativeName>
        <fullName>Citrate transporter</fullName>
    </alternativeName>
</protein>
<name>CITT_ECO57</name>
<feature type="chain" id="PRO_0000172522" description="Citrate/succinate antiporter">
    <location>
        <begin position="1"/>
        <end position="487"/>
    </location>
</feature>
<feature type="transmembrane region" description="Helical" evidence="2">
    <location>
        <begin position="11"/>
        <end position="31"/>
    </location>
</feature>
<feature type="transmembrane region" description="Helical" evidence="2">
    <location>
        <begin position="60"/>
        <end position="80"/>
    </location>
</feature>
<feature type="transmembrane region" description="Helical" evidence="2">
    <location>
        <begin position="95"/>
        <end position="115"/>
    </location>
</feature>
<feature type="transmembrane region" description="Helical" evidence="2">
    <location>
        <begin position="138"/>
        <end position="158"/>
    </location>
</feature>
<feature type="transmembrane region" description="Helical" evidence="2">
    <location>
        <begin position="190"/>
        <end position="210"/>
    </location>
</feature>
<feature type="transmembrane region" description="Helical" evidence="2">
    <location>
        <begin position="214"/>
        <end position="234"/>
    </location>
</feature>
<feature type="transmembrane region" description="Helical" evidence="2">
    <location>
        <begin position="237"/>
        <end position="257"/>
    </location>
</feature>
<feature type="transmembrane region" description="Helical" evidence="2">
    <location>
        <begin position="288"/>
        <end position="308"/>
    </location>
</feature>
<feature type="transmembrane region" description="Helical" evidence="2">
    <location>
        <begin position="309"/>
        <end position="329"/>
    </location>
</feature>
<feature type="transmembrane region" description="Helical" evidence="2">
    <location>
        <begin position="345"/>
        <end position="365"/>
    </location>
</feature>
<feature type="transmembrane region" description="Helical" evidence="2">
    <location>
        <begin position="379"/>
        <end position="399"/>
    </location>
</feature>
<feature type="transmembrane region" description="Helical" evidence="2">
    <location>
        <begin position="401"/>
        <end position="421"/>
    </location>
</feature>
<feature type="transmembrane region" description="Helical" evidence="2">
    <location>
        <begin position="424"/>
        <end position="444"/>
    </location>
</feature>
<feature type="transmembrane region" description="Helical" evidence="2">
    <location>
        <begin position="463"/>
        <end position="483"/>
    </location>
</feature>